<proteinExistence type="evidence at transcript level"/>
<feature type="chain" id="PRO_0000286393" description="Kelch-like ECH-associated protein 1">
    <location>
        <begin position="1"/>
        <end position="624"/>
    </location>
</feature>
<feature type="domain" description="BTB" evidence="3">
    <location>
        <begin position="77"/>
        <end position="149"/>
    </location>
</feature>
<feature type="domain" description="BACK">
    <location>
        <begin position="184"/>
        <end position="286"/>
    </location>
</feature>
<feature type="repeat" description="Kelch 1">
    <location>
        <begin position="327"/>
        <end position="372"/>
    </location>
</feature>
<feature type="repeat" description="Kelch 2">
    <location>
        <begin position="373"/>
        <end position="423"/>
    </location>
</feature>
<feature type="repeat" description="Kelch 3">
    <location>
        <begin position="424"/>
        <end position="470"/>
    </location>
</feature>
<feature type="repeat" description="Kelch 4">
    <location>
        <begin position="471"/>
        <end position="517"/>
    </location>
</feature>
<feature type="repeat" description="Kelch 5">
    <location>
        <begin position="518"/>
        <end position="564"/>
    </location>
</feature>
<feature type="repeat" description="Kelch 6">
    <location>
        <begin position="565"/>
        <end position="611"/>
    </location>
</feature>
<feature type="site" description="Sensor for electrophilic agents" evidence="2">
    <location>
        <position position="151"/>
    </location>
</feature>
<feature type="site" description="Sensor for electrophilic agents" evidence="1">
    <location>
        <position position="257"/>
    </location>
</feature>
<feature type="site" description="Sensor for electrophilic agents" evidence="1">
    <location>
        <position position="273"/>
    </location>
</feature>
<feature type="site" description="Sensor for electrophilic agents" evidence="2">
    <location>
        <position position="288"/>
    </location>
</feature>
<feature type="site" description="Sensor for electrophilic agents" evidence="2">
    <location>
        <position position="434"/>
    </location>
</feature>
<feature type="modified residue" description="S-(2-succinyl)cysteine" evidence="2">
    <location>
        <position position="38"/>
    </location>
</feature>
<feature type="modified residue" description="S-(2,3-dicarboxypropyl)cysteine; alternate" evidence="1">
    <location>
        <position position="151"/>
    </location>
</feature>
<feature type="modified residue" description="S-(2-succinyl)cysteine" evidence="2">
    <location>
        <position position="151"/>
    </location>
</feature>
<feature type="modified residue" description="S-nitrosocysteine; alternate" evidence="2">
    <location>
        <position position="151"/>
    </location>
</feature>
<feature type="modified residue" description="S-(2-succinyl)cysteine" evidence="2">
    <location>
        <position position="241"/>
    </location>
</feature>
<feature type="modified residue" description="S-(2,3-dicarboxypropyl)cysteine" evidence="1">
    <location>
        <position position="257"/>
    </location>
</feature>
<feature type="modified residue" description="S-(2,3-dicarboxypropyl)cysteine" evidence="1">
    <location>
        <position position="273"/>
    </location>
</feature>
<feature type="modified residue" description="S-(2,3-dicarboxypropyl)cysteine; alternate" evidence="1">
    <location>
        <position position="288"/>
    </location>
</feature>
<feature type="modified residue" description="S-(2-succinyl)cysteine" evidence="2">
    <location>
        <position position="288"/>
    </location>
</feature>
<feature type="modified residue" description="S-(2-succinyl)cysteine" evidence="2">
    <location>
        <position position="319"/>
    </location>
</feature>
<feature type="modified residue" description="S-cGMP-cysteine" evidence="2">
    <location>
        <position position="434"/>
    </location>
</feature>
<feature type="modified residue" description="S-(2-succinyl)cysteine" evidence="2">
    <location>
        <position position="613"/>
    </location>
</feature>
<feature type="cross-link" description="N5-[4-(S-L-cysteinyl)-5-methyl-1H-imidazol-2-yl]-L-ornithine (Arg-Cys) (interchain with C-151 in KEAP1)" evidence="1">
    <location>
        <position position="135"/>
    </location>
</feature>
<feature type="cross-link" description="N5-[4-(S-L-cysteinyl)-5-methyl-1H-imidazol-2-yl]-L-ornithine (Cys-Arg) (interchain with R-135 in KEAP1)" evidence="1">
    <location>
        <position position="151"/>
    </location>
</feature>
<organism>
    <name type="scientific">Pongo abelii</name>
    <name type="common">Sumatran orangutan</name>
    <name type="synonym">Pongo pygmaeus abelii</name>
    <dbReference type="NCBI Taxonomy" id="9601"/>
    <lineage>
        <taxon>Eukaryota</taxon>
        <taxon>Metazoa</taxon>
        <taxon>Chordata</taxon>
        <taxon>Craniata</taxon>
        <taxon>Vertebrata</taxon>
        <taxon>Euteleostomi</taxon>
        <taxon>Mammalia</taxon>
        <taxon>Eutheria</taxon>
        <taxon>Euarchontoglires</taxon>
        <taxon>Primates</taxon>
        <taxon>Haplorrhini</taxon>
        <taxon>Catarrhini</taxon>
        <taxon>Hominidae</taxon>
        <taxon>Pongo</taxon>
    </lineage>
</organism>
<sequence>MQPDPRPSGAGACSRFLPLRSQCPEGAGDAVMYASTECKAEVTPSQHGNRTFSYTLEDHTKQAFGIMNELRLSQQLCDVTLQVKYQDAPAAQFMAHKVVLASSSPVFKAMFTNGLREQGMEVVSIEGIHPKVMERLIEFAYTASISMGEKCVLHVMNGAVMYQIDSVVRACSDFLVQQLDPSNAIGIANFAEQIGCVELHQRAREYIYMHFGEVTKQEEFFNLSHCQLVTLISRDDLNVRCESEVFHACINWVKYDCEQRRFYVQALLRAVRCHSLTPNFLQMQLQKCEILQSDSRCKDYLVKIFEELTLHKPTQVMPCRAPKVGRLIYTAGGYFRQSLSYLEAYNPSDGTWLRLADLQVPRSGLAGCVVGGLLYAVGGRNNSPDGNTDSSALDCYNPMTNQWSPCAPMSVPRNRIGVGVIDGHIYAVGGSHGCIHHNSVERYEPERDEWHLVAPMLTRRIGVGVAVLNRLLYAVGGFDGTNRLNSAECYYPERNEWRMITAMNTIRSGAGVCVLHNCIYAAGGYDGQDQLNSVERYDVETETWTFVAPMKHRRSALGITVHQGRIYVLGGYDGHTFLDSVECYDPDTDTWSEVTRMTSGRSGVGVAVTMEPCRKQIDQQNCTC</sequence>
<reference key="1">
    <citation type="submission" date="2004-11" db="EMBL/GenBank/DDBJ databases">
        <authorList>
            <consortium name="The German cDNA consortium"/>
        </authorList>
    </citation>
    <scope>NUCLEOTIDE SEQUENCE [LARGE SCALE MRNA]</scope>
    <source>
        <tissue>Kidney</tissue>
    </source>
</reference>
<comment type="function">
    <text evidence="1 2">Substrate-specific adapter of a BCR (BTB-CUL3-RBX1) E3 ubiquitin ligase complex that regulates the response to oxidative stress by targeting NFE2L2/NRF2 for ubiquitination. KEAP1 acts as a key sensor of oxidative and electrophilic stress: in normal conditions, the BCR(KEAP1) complex mediates ubiquitination and degradation of NFE2L2/NRF2, a transcription factor regulating expression of many cytoprotective genes. In response to oxidative stress, different electrophile metabolites trigger non-enzymatic covalent modifications of highly reactive cysteine residues in KEAP1, leading to inactivate the ubiquitin ligase activity of the BCR(KEAP1) complex, promoting NFE2L2/NRF2 nuclear accumulation and expression of phase II detoxifying enzymes. In response to selective autophagy, KEAP1 is sequestered in inclusion bodies following its interaction with SQSTM1/p62, leading to inactivation of the BCR(KEAP1) complex and activation of NFE2L2/NRF2. The BCR(KEAP1) complex also mediates ubiquitination of SQSTM1/p62, increasing SQSTM1/p62 sequestering activity and degradation (By similarity). The BCR(KEAP1) complex also targets BPTF and PGAM5 for ubiquitination and degradation by the proteasome (By similarity).</text>
</comment>
<comment type="activity regulation">
    <text evidence="2">Ubiquitin ligase activity of the BCR(KEAP1) complex is inhibited by oxidative stress and electrophile metabolites such as sulforaphane. Electrophile metabolites react with reactive cysteine residues in KEAP1 and trigger non-enzymatic covalent modifications of these cysteine residues, leading to inactivate the ubiquitin ligase activity of the BCR(KEAP1) complex. Selective autophagy also inactivates the BCR(KEAP1) complex via interaction between KEAP1 and SQSTM1/p62, which sequesters the complex in inclusion bodies and promotes its degradation.</text>
</comment>
<comment type="pathway">
    <text evidence="2">Protein modification; protein ubiquitination.</text>
</comment>
<comment type="subunit">
    <text evidence="1 2">Component of the BCR(KEAP1) E3 ubiquitin ligase complex, at least composed of 2 molecules of CUL3, 2 molecules of KEAP1, and RBX1. Interacts with NFE2L2/NRF2; the interaction is direct (By similarity). Forms a ternary complex with NFE2L2/NRF2 and PGAM5 (By similarity). Interacts with (phosphorylated) SQSTM1/p62; the interaction is direct and inactivates the BCR(KEAP1) complex by sequestering it in inclusion bodies, promoting its degradation (By similarity). Interacts with NFE2L1. Interacts with BPTF and PTMA. Interacts with MAP1LC3B. Interacts indirectly with ENC1. Interacts with SESN1 and SESN2. Interacts with HSP90AA1 and HSP90AB1 (By similarity). Interacts with PGCKA1; this interaction prevents the ubiquitination of KEAP1 by TRIM25, thus protecting KEAP1 from degradation (By similarity).</text>
</comment>
<comment type="subcellular location">
    <subcellularLocation>
        <location evidence="2">Cytoplasm</location>
    </subcellularLocation>
    <subcellularLocation>
        <location evidence="2">Nucleus</location>
    </subcellularLocation>
    <text evidence="2">Mainly cytoplasmic. In response to selective autophagy, relocalizes to inclusion bodies following interaction with SQSTM1/p62.</text>
</comment>
<comment type="domain">
    <text evidence="1">The Kelch repeats mediate interaction with NFE2L2/NRF2, BPTF and PGAM5.</text>
</comment>
<comment type="domain">
    <text evidence="2">KEAP1 contains reactive cysteine residues that act as sensors for endogenously produced and exogenously encountered small molecules, which react with sulfhydryl groups and modify the cysteine sensors, leading to impair ability of the BCR(KEAP1) complex to ubiquitinate target proteins.</text>
</comment>
<comment type="PTM">
    <text evidence="1 2">Non-enzymatic covalent modifications of reactive cysteines by electrophile metabolites inactivate the BCR(KEAP1) complex. Accumulation of fumarate promotes the formation of cysteine S-succination (S-(2-succinyl)cysteine), leading to inactivate the BCR(KEAP1) complex and promote NFE2L2/NRF2 nuclear accumulation and activation. Nitric oxide-dependent 8-Nitro-cGMP formation promotes cysteine guanylation (S-cGMP-cysteine), leading to NFE2L2/NRF2 nuclear accumulation and activation. Itaconate, an anti-inflammatory metabolite generated in response to lipopolysaccharide, alkylates cysteines, activating NFE2L2/NRF2 (By similarity). Methylglyoxal, a reactive metabolite that accumulates when the glycolytic enzyme PGK1 is inhibited, promotes formation of a methylimidazole cross-link between proximal Cys-151 and Arg-135 on another KEAP1 molecule, resulting in an inactive dimer that inactivates the BCR(KEAP1) complex (By similarity).</text>
</comment>
<comment type="PTM">
    <text evidence="2">Degraded via a proteasomal-independent process during selective autophagy: interaction with phosphorylated SQSTM1/p62 sequesters KEAP1 in inclusion bodies, leading to its degradation.</text>
</comment>
<comment type="PTM">
    <text evidence="1">Auto-ubiquitinated by the BCR(KEAP1) complex. Quinone-induced oxidative stress, but not sulforaphane, increases its ubiquitination. Ubiquitination and subsequent degradation is most pronounced following prolonged exposure of cells to oxidative stress, particularly in glutathione-deficient cells that are highly susceptible to oxidative stress. Deubiquitinated by USP25; leading to stabilization. Ubiquitinated by TRIM25; leading to degradation upon ER stress (By similarity).</text>
</comment>
<comment type="similarity">
    <text evidence="4">Belongs to the KEAP1 family.</text>
</comment>
<keyword id="KW-0963">Cytoplasm</keyword>
<keyword id="KW-0880">Kelch repeat</keyword>
<keyword id="KW-0539">Nucleus</keyword>
<keyword id="KW-1185">Reference proteome</keyword>
<keyword id="KW-0677">Repeat</keyword>
<keyword id="KW-0702">S-nitrosylation</keyword>
<keyword id="KW-0883">Thioether bond</keyword>
<keyword id="KW-0832">Ubl conjugation</keyword>
<keyword id="KW-0833">Ubl conjugation pathway</keyword>
<protein>
    <recommendedName>
        <fullName evidence="1">Kelch-like ECH-associated protein 1</fullName>
    </recommendedName>
</protein>
<evidence type="ECO:0000250" key="1">
    <source>
        <dbReference type="UniProtKB" id="Q14145"/>
    </source>
</evidence>
<evidence type="ECO:0000250" key="2">
    <source>
        <dbReference type="UniProtKB" id="Q9Z2X8"/>
    </source>
</evidence>
<evidence type="ECO:0000255" key="3">
    <source>
        <dbReference type="PROSITE-ProRule" id="PRU00037"/>
    </source>
</evidence>
<evidence type="ECO:0000305" key="4"/>
<gene>
    <name evidence="1" type="primary">KEAP1</name>
</gene>
<name>KEAP1_PONAB</name>
<accession>Q5R774</accession>
<dbReference type="EMBL" id="CR860244">
    <property type="protein sequence ID" value="CAH92386.1"/>
    <property type="molecule type" value="mRNA"/>
</dbReference>
<dbReference type="RefSeq" id="NP_001126406.1">
    <property type="nucleotide sequence ID" value="NM_001132934.1"/>
</dbReference>
<dbReference type="BMRB" id="Q5R774"/>
<dbReference type="SMR" id="Q5R774"/>
<dbReference type="FunCoup" id="Q5R774">
    <property type="interactions" value="659"/>
</dbReference>
<dbReference type="STRING" id="9601.ENSPPYP00000010716"/>
<dbReference type="BindingDB" id="Q5R774"/>
<dbReference type="GeneID" id="100173389"/>
<dbReference type="KEGG" id="pon:100173389"/>
<dbReference type="CTD" id="9817"/>
<dbReference type="eggNOG" id="KOG4441">
    <property type="taxonomic scope" value="Eukaryota"/>
</dbReference>
<dbReference type="InParanoid" id="Q5R774"/>
<dbReference type="OrthoDB" id="45365at2759"/>
<dbReference type="UniPathway" id="UPA00143"/>
<dbReference type="Proteomes" id="UP000001595">
    <property type="component" value="Unplaced"/>
</dbReference>
<dbReference type="GO" id="GO:0031463">
    <property type="term" value="C:Cul3-RING ubiquitin ligase complex"/>
    <property type="evidence" value="ECO:0000250"/>
    <property type="project" value="UniProtKB"/>
</dbReference>
<dbReference type="GO" id="GO:0005737">
    <property type="term" value="C:cytoplasm"/>
    <property type="evidence" value="ECO:0000250"/>
    <property type="project" value="UniProtKB"/>
</dbReference>
<dbReference type="GO" id="GO:0016234">
    <property type="term" value="C:inclusion body"/>
    <property type="evidence" value="ECO:0000250"/>
    <property type="project" value="UniProtKB"/>
</dbReference>
<dbReference type="GO" id="GO:0005634">
    <property type="term" value="C:nucleus"/>
    <property type="evidence" value="ECO:0007669"/>
    <property type="project" value="UniProtKB-SubCell"/>
</dbReference>
<dbReference type="GO" id="GO:0034599">
    <property type="term" value="P:cellular response to oxidative stress"/>
    <property type="evidence" value="ECO:0000250"/>
    <property type="project" value="UniProtKB"/>
</dbReference>
<dbReference type="GO" id="GO:0016567">
    <property type="term" value="P:protein ubiquitination"/>
    <property type="evidence" value="ECO:0000250"/>
    <property type="project" value="UniProtKB"/>
</dbReference>
<dbReference type="GO" id="GO:0010506">
    <property type="term" value="P:regulation of autophagy"/>
    <property type="evidence" value="ECO:0000250"/>
    <property type="project" value="UniProtKB"/>
</dbReference>
<dbReference type="GO" id="GO:0006511">
    <property type="term" value="P:ubiquitin-dependent protein catabolic process"/>
    <property type="evidence" value="ECO:0000250"/>
    <property type="project" value="UniProtKB"/>
</dbReference>
<dbReference type="CDD" id="cd18458">
    <property type="entry name" value="BACK_KLHL19_KEAP1"/>
    <property type="match status" value="1"/>
</dbReference>
<dbReference type="CDD" id="cd18248">
    <property type="entry name" value="BTB_POZ_KLHL19_KEAP1"/>
    <property type="match status" value="1"/>
</dbReference>
<dbReference type="FunFam" id="2.120.10.80:FF:000024">
    <property type="entry name" value="Kelch-like ECH-associated protein 1"/>
    <property type="match status" value="1"/>
</dbReference>
<dbReference type="FunFam" id="1.25.40.420:FF:000001">
    <property type="entry name" value="Kelch-like family member 12"/>
    <property type="match status" value="1"/>
</dbReference>
<dbReference type="FunFam" id="3.30.710.10:FF:000001">
    <property type="entry name" value="Kelch-like family member 20"/>
    <property type="match status" value="1"/>
</dbReference>
<dbReference type="Gene3D" id="1.25.40.420">
    <property type="match status" value="1"/>
</dbReference>
<dbReference type="Gene3D" id="2.120.10.80">
    <property type="entry name" value="Kelch-type beta propeller"/>
    <property type="match status" value="1"/>
</dbReference>
<dbReference type="Gene3D" id="3.30.710.10">
    <property type="entry name" value="Potassium Channel Kv1.1, Chain A"/>
    <property type="match status" value="1"/>
</dbReference>
<dbReference type="InterPro" id="IPR011705">
    <property type="entry name" value="BACK"/>
</dbReference>
<dbReference type="InterPro" id="IPR017096">
    <property type="entry name" value="BTB-kelch_protein"/>
</dbReference>
<dbReference type="InterPro" id="IPR000210">
    <property type="entry name" value="BTB/POZ_dom"/>
</dbReference>
<dbReference type="InterPro" id="IPR047098">
    <property type="entry name" value="KEAP1_BACK"/>
</dbReference>
<dbReference type="InterPro" id="IPR030563">
    <property type="entry name" value="KEAP1_BTB_POZ_dom"/>
</dbReference>
<dbReference type="InterPro" id="IPR015915">
    <property type="entry name" value="Kelch-typ_b-propeller"/>
</dbReference>
<dbReference type="InterPro" id="IPR006652">
    <property type="entry name" value="Kelch_1"/>
</dbReference>
<dbReference type="InterPro" id="IPR011333">
    <property type="entry name" value="SKP1/BTB/POZ_sf"/>
</dbReference>
<dbReference type="PANTHER" id="PTHR24412">
    <property type="entry name" value="KELCH PROTEIN"/>
    <property type="match status" value="1"/>
</dbReference>
<dbReference type="PANTHER" id="PTHR24412:SF441">
    <property type="entry name" value="KELCH-LIKE PROTEIN 28"/>
    <property type="match status" value="1"/>
</dbReference>
<dbReference type="Pfam" id="PF07707">
    <property type="entry name" value="BACK"/>
    <property type="match status" value="1"/>
</dbReference>
<dbReference type="Pfam" id="PF00651">
    <property type="entry name" value="BTB"/>
    <property type="match status" value="1"/>
</dbReference>
<dbReference type="Pfam" id="PF01344">
    <property type="entry name" value="Kelch_1"/>
    <property type="match status" value="3"/>
</dbReference>
<dbReference type="Pfam" id="PF24681">
    <property type="entry name" value="Kelch_KLHDC2_KLHL20_DRC7"/>
    <property type="match status" value="1"/>
</dbReference>
<dbReference type="PIRSF" id="PIRSF037037">
    <property type="entry name" value="Kelch-like_protein_gigaxonin"/>
    <property type="match status" value="1"/>
</dbReference>
<dbReference type="SMART" id="SM00875">
    <property type="entry name" value="BACK"/>
    <property type="match status" value="1"/>
</dbReference>
<dbReference type="SMART" id="SM00225">
    <property type="entry name" value="BTB"/>
    <property type="match status" value="1"/>
</dbReference>
<dbReference type="SMART" id="SM00612">
    <property type="entry name" value="Kelch"/>
    <property type="match status" value="6"/>
</dbReference>
<dbReference type="SUPFAM" id="SSF117281">
    <property type="entry name" value="Kelch motif"/>
    <property type="match status" value="1"/>
</dbReference>
<dbReference type="SUPFAM" id="SSF54695">
    <property type="entry name" value="POZ domain"/>
    <property type="match status" value="1"/>
</dbReference>
<dbReference type="PROSITE" id="PS50097">
    <property type="entry name" value="BTB"/>
    <property type="match status" value="1"/>
</dbReference>